<reference key="1">
    <citation type="journal article" date="2000" name="Nucleic Acids Res.">
        <title>Genome sequences of Chlamydia trachomatis MoPn and Chlamydia pneumoniae AR39.</title>
        <authorList>
            <person name="Read T.D."/>
            <person name="Brunham R.C."/>
            <person name="Shen C."/>
            <person name="Gill S.R."/>
            <person name="Heidelberg J.F."/>
            <person name="White O."/>
            <person name="Hickey E.K."/>
            <person name="Peterson J.D."/>
            <person name="Utterback T.R."/>
            <person name="Berry K.J."/>
            <person name="Bass S."/>
            <person name="Linher K.D."/>
            <person name="Weidman J.F."/>
            <person name="Khouri H.M."/>
            <person name="Craven B."/>
            <person name="Bowman C."/>
            <person name="Dodson R.J."/>
            <person name="Gwinn M.L."/>
            <person name="Nelson W.C."/>
            <person name="DeBoy R.T."/>
            <person name="Kolonay J.F."/>
            <person name="McClarty G."/>
            <person name="Salzberg S.L."/>
            <person name="Eisen J.A."/>
            <person name="Fraser C.M."/>
        </authorList>
    </citation>
    <scope>NUCLEOTIDE SEQUENCE [LARGE SCALE GENOMIC DNA]</scope>
    <source>
        <strain>MoPn / Nigg</strain>
    </source>
</reference>
<protein>
    <recommendedName>
        <fullName>6-phosphogluconate dehydrogenase, decarboxylating</fullName>
        <ecNumber>1.1.1.44</ecNumber>
    </recommendedName>
</protein>
<gene>
    <name type="primary">gnd</name>
    <name type="ordered locus">TC_0333</name>
</gene>
<comment type="function">
    <text evidence="1">Catalyzes the oxidative decarboxylation of 6-phosphogluconate to ribulose 5-phosphate and CO(2), with concomitant reduction of NADP to NADPH.</text>
</comment>
<comment type="catalytic activity">
    <reaction>
        <text>6-phospho-D-gluconate + NADP(+) = D-ribulose 5-phosphate + CO2 + NADPH</text>
        <dbReference type="Rhea" id="RHEA:10116"/>
        <dbReference type="ChEBI" id="CHEBI:16526"/>
        <dbReference type="ChEBI" id="CHEBI:57783"/>
        <dbReference type="ChEBI" id="CHEBI:58121"/>
        <dbReference type="ChEBI" id="CHEBI:58349"/>
        <dbReference type="ChEBI" id="CHEBI:58759"/>
        <dbReference type="EC" id="1.1.1.44"/>
    </reaction>
</comment>
<comment type="pathway">
    <text>Carbohydrate degradation; pentose phosphate pathway; D-ribulose 5-phosphate from D-glucose 6-phosphate (oxidative stage): step 3/3.</text>
</comment>
<comment type="subunit">
    <text evidence="1">Homodimer.</text>
</comment>
<comment type="similarity">
    <text evidence="2">Belongs to the 6-phosphogluconate dehydrogenase family.</text>
</comment>
<organism>
    <name type="scientific">Chlamydia muridarum (strain MoPn / Nigg)</name>
    <dbReference type="NCBI Taxonomy" id="243161"/>
    <lineage>
        <taxon>Bacteria</taxon>
        <taxon>Pseudomonadati</taxon>
        <taxon>Chlamydiota</taxon>
        <taxon>Chlamydiia</taxon>
        <taxon>Chlamydiales</taxon>
        <taxon>Chlamydiaceae</taxon>
        <taxon>Chlamydia/Chlamydophila group</taxon>
        <taxon>Chlamydia</taxon>
    </lineage>
</organism>
<accession>Q9PKX7</accession>
<evidence type="ECO:0000250" key="1"/>
<evidence type="ECO:0000305" key="2"/>
<feature type="chain" id="PRO_0000090031" description="6-phosphogluconate dehydrogenase, decarboxylating">
    <location>
        <begin position="1"/>
        <end position="479"/>
    </location>
</feature>
<feature type="active site" description="Proton acceptor" evidence="1">
    <location>
        <position position="183"/>
    </location>
</feature>
<feature type="active site" description="Proton donor" evidence="1">
    <location>
        <position position="190"/>
    </location>
</feature>
<feature type="binding site" evidence="1">
    <location>
        <begin position="10"/>
        <end position="15"/>
    </location>
    <ligand>
        <name>NADP(+)</name>
        <dbReference type="ChEBI" id="CHEBI:58349"/>
    </ligand>
</feature>
<feature type="binding site" evidence="1">
    <location>
        <begin position="33"/>
        <end position="35"/>
    </location>
    <ligand>
        <name>NADP(+)</name>
        <dbReference type="ChEBI" id="CHEBI:58349"/>
    </ligand>
</feature>
<feature type="binding site" evidence="1">
    <location>
        <begin position="75"/>
        <end position="77"/>
    </location>
    <ligand>
        <name>NADP(+)</name>
        <dbReference type="ChEBI" id="CHEBI:58349"/>
    </ligand>
</feature>
<feature type="binding site" evidence="1">
    <location>
        <position position="103"/>
    </location>
    <ligand>
        <name>NADP(+)</name>
        <dbReference type="ChEBI" id="CHEBI:58349"/>
    </ligand>
</feature>
<feature type="binding site" description="in other chain" evidence="1">
    <location>
        <position position="103"/>
    </location>
    <ligand>
        <name>substrate</name>
        <note>ligand shared between dimeric partners</note>
    </ligand>
</feature>
<feature type="binding site" description="in other chain" evidence="1">
    <location>
        <begin position="129"/>
        <end position="131"/>
    </location>
    <ligand>
        <name>substrate</name>
        <note>ligand shared between dimeric partners</note>
    </ligand>
</feature>
<feature type="binding site" description="in other chain" evidence="1">
    <location>
        <begin position="186"/>
        <end position="187"/>
    </location>
    <ligand>
        <name>substrate</name>
        <note>ligand shared between dimeric partners</note>
    </ligand>
</feature>
<feature type="binding site" description="in other chain" evidence="1">
    <location>
        <position position="191"/>
    </location>
    <ligand>
        <name>substrate</name>
        <note>ligand shared between dimeric partners</note>
    </ligand>
</feature>
<feature type="binding site" description="in other chain" evidence="1">
    <location>
        <position position="260"/>
    </location>
    <ligand>
        <name>substrate</name>
        <note>ligand shared between dimeric partners</note>
    </ligand>
</feature>
<feature type="binding site" description="in other chain" evidence="1">
    <location>
        <position position="287"/>
    </location>
    <ligand>
        <name>substrate</name>
        <note>ligand shared between dimeric partners</note>
    </ligand>
</feature>
<feature type="binding site" evidence="1">
    <location>
        <position position="447"/>
    </location>
    <ligand>
        <name>substrate</name>
        <note>ligand shared between dimeric partners</note>
    </ligand>
</feature>
<feature type="binding site" evidence="1">
    <location>
        <position position="453"/>
    </location>
    <ligand>
        <name>substrate</name>
        <note>ligand shared between dimeric partners</note>
    </ligand>
</feature>
<keyword id="KW-0311">Gluconate utilization</keyword>
<keyword id="KW-0521">NADP</keyword>
<keyword id="KW-0560">Oxidoreductase</keyword>
<keyword id="KW-0570">Pentose shunt</keyword>
<dbReference type="EC" id="1.1.1.44"/>
<dbReference type="EMBL" id="AE002160">
    <property type="protein sequence ID" value="AAF39196.1"/>
    <property type="molecule type" value="Genomic_DNA"/>
</dbReference>
<dbReference type="PIR" id="A81714">
    <property type="entry name" value="A81714"/>
</dbReference>
<dbReference type="SMR" id="Q9PKX7"/>
<dbReference type="KEGG" id="cmu:TC_0333"/>
<dbReference type="eggNOG" id="COG0362">
    <property type="taxonomic scope" value="Bacteria"/>
</dbReference>
<dbReference type="HOGENOM" id="CLU_024540_4_2_0"/>
<dbReference type="OrthoDB" id="9804542at2"/>
<dbReference type="UniPathway" id="UPA00115">
    <property type="reaction ID" value="UER00410"/>
</dbReference>
<dbReference type="Proteomes" id="UP000000800">
    <property type="component" value="Chromosome"/>
</dbReference>
<dbReference type="GO" id="GO:0050661">
    <property type="term" value="F:NADP binding"/>
    <property type="evidence" value="ECO:0007669"/>
    <property type="project" value="InterPro"/>
</dbReference>
<dbReference type="GO" id="GO:0004616">
    <property type="term" value="F:phosphogluconate dehydrogenase (decarboxylating) activity"/>
    <property type="evidence" value="ECO:0007669"/>
    <property type="project" value="UniProtKB-EC"/>
</dbReference>
<dbReference type="GO" id="GO:0019521">
    <property type="term" value="P:D-gluconate metabolic process"/>
    <property type="evidence" value="ECO:0007669"/>
    <property type="project" value="UniProtKB-KW"/>
</dbReference>
<dbReference type="GO" id="GO:0016054">
    <property type="term" value="P:organic acid catabolic process"/>
    <property type="evidence" value="ECO:0007669"/>
    <property type="project" value="UniProtKB-ARBA"/>
</dbReference>
<dbReference type="GO" id="GO:0006098">
    <property type="term" value="P:pentose-phosphate shunt"/>
    <property type="evidence" value="ECO:0007669"/>
    <property type="project" value="UniProtKB-UniPathway"/>
</dbReference>
<dbReference type="FunFam" id="1.10.1040.10:FF:000002">
    <property type="entry name" value="6-phosphogluconate dehydrogenase, decarboxylating"/>
    <property type="match status" value="1"/>
</dbReference>
<dbReference type="FunFam" id="3.40.50.720:FF:000007">
    <property type="entry name" value="6-phosphogluconate dehydrogenase, decarboxylating"/>
    <property type="match status" value="1"/>
</dbReference>
<dbReference type="Gene3D" id="1.20.5.320">
    <property type="entry name" value="6-Phosphogluconate Dehydrogenase, domain 3"/>
    <property type="match status" value="1"/>
</dbReference>
<dbReference type="Gene3D" id="1.10.1040.10">
    <property type="entry name" value="N-(1-d-carboxylethyl)-l-norvaline Dehydrogenase, domain 2"/>
    <property type="match status" value="1"/>
</dbReference>
<dbReference type="Gene3D" id="3.40.50.720">
    <property type="entry name" value="NAD(P)-binding Rossmann-like Domain"/>
    <property type="match status" value="1"/>
</dbReference>
<dbReference type="InterPro" id="IPR008927">
    <property type="entry name" value="6-PGluconate_DH-like_C_sf"/>
</dbReference>
<dbReference type="InterPro" id="IPR013328">
    <property type="entry name" value="6PGD_dom2"/>
</dbReference>
<dbReference type="InterPro" id="IPR006114">
    <property type="entry name" value="6PGDH_C"/>
</dbReference>
<dbReference type="InterPro" id="IPR006113">
    <property type="entry name" value="6PGDH_Gnd/GntZ"/>
</dbReference>
<dbReference type="InterPro" id="IPR006115">
    <property type="entry name" value="6PGDH_NADP-bd"/>
</dbReference>
<dbReference type="InterPro" id="IPR006184">
    <property type="entry name" value="6PGdom_BS"/>
</dbReference>
<dbReference type="InterPro" id="IPR036291">
    <property type="entry name" value="NAD(P)-bd_dom_sf"/>
</dbReference>
<dbReference type="InterPro" id="IPR006183">
    <property type="entry name" value="Pgluconate_DH"/>
</dbReference>
<dbReference type="NCBIfam" id="TIGR00873">
    <property type="entry name" value="gnd"/>
    <property type="match status" value="1"/>
</dbReference>
<dbReference type="NCBIfam" id="NF006765">
    <property type="entry name" value="PRK09287.1"/>
    <property type="match status" value="1"/>
</dbReference>
<dbReference type="PANTHER" id="PTHR11811">
    <property type="entry name" value="6-PHOSPHOGLUCONATE DEHYDROGENASE"/>
    <property type="match status" value="1"/>
</dbReference>
<dbReference type="Pfam" id="PF00393">
    <property type="entry name" value="6PGD"/>
    <property type="match status" value="1"/>
</dbReference>
<dbReference type="Pfam" id="PF03446">
    <property type="entry name" value="NAD_binding_2"/>
    <property type="match status" value="1"/>
</dbReference>
<dbReference type="PIRSF" id="PIRSF000109">
    <property type="entry name" value="6PGD"/>
    <property type="match status" value="1"/>
</dbReference>
<dbReference type="PRINTS" id="PR00076">
    <property type="entry name" value="6PGDHDRGNASE"/>
</dbReference>
<dbReference type="SMART" id="SM01350">
    <property type="entry name" value="6PGD"/>
    <property type="match status" value="1"/>
</dbReference>
<dbReference type="SUPFAM" id="SSF48179">
    <property type="entry name" value="6-phosphogluconate dehydrogenase C-terminal domain-like"/>
    <property type="match status" value="1"/>
</dbReference>
<dbReference type="SUPFAM" id="SSF51735">
    <property type="entry name" value="NAD(P)-binding Rossmann-fold domains"/>
    <property type="match status" value="1"/>
</dbReference>
<dbReference type="PROSITE" id="PS00461">
    <property type="entry name" value="6PGD"/>
    <property type="match status" value="1"/>
</dbReference>
<name>6PGD_CHLMU</name>
<proteinExistence type="inferred from homology"/>
<sequence length="479" mass="52689">MAPADIGLIGLAVMGKNLVLNMIDHGFAVSVYNRSPEKTEEFLKEHGENISLQGFTAIEEFVQSLKRPRKIMIMIKAGAPVDEMISSLLPFLEEGDILIDGGNSYYLDSERRYIDLKKKGILFVGMGVSGGEEGARKGPSIMPGGNIEAWPVIAPIFQSIAAQVDGQPCCSWIGTGGAGHFVKAVHNGIEYGDIQLICETYEILKSRLDLSLEQIGNIFFEWNQTDLNSYLMGASAAVLTAKDENGVAVASTILDVAGQKGTGRWVAEDAIKAGVPMSLIIESVLARYLSAWKEVRRQAAREFPVASLLYQPSQEASVLIEDAREALYAAKIISYAQGFMLLKQISEERNWDLNLGELALIWRGGCIIQSAFLDKIHQGFESCPDAHSLMLQDYFKNVLLNSETGFRRAILHAVGAGVAIPCLASALAFYDGYRTENSPLFLVQGLRDYFGAHGYERQDRPRGEFYHTDWLGSKNASRM</sequence>